<keyword id="KW-0106">Calcium</keyword>
<keyword id="KW-0968">Cytoplasmic vesicle</keyword>
<keyword id="KW-0325">Glycoprotein</keyword>
<keyword id="KW-0472">Membrane</keyword>
<keyword id="KW-0479">Metal-binding</keyword>
<keyword id="KW-0677">Repeat</keyword>
<keyword id="KW-0770">Synapse</keyword>
<keyword id="KW-0812">Transmembrane</keyword>
<keyword id="KW-1133">Transmembrane helix</keyword>
<dbReference type="EMBL" id="M64275">
    <property type="protein sequence ID" value="AAA49227.1"/>
    <property type="molecule type" value="mRNA"/>
</dbReference>
<dbReference type="PIR" id="JH0413">
    <property type="entry name" value="JH0413"/>
</dbReference>
<dbReference type="SMR" id="P24505"/>
<dbReference type="GlyCosmos" id="P24505">
    <property type="glycosylation" value="1 site, No reported glycans"/>
</dbReference>
<dbReference type="GO" id="GO:0030424">
    <property type="term" value="C:axon"/>
    <property type="evidence" value="ECO:0007669"/>
    <property type="project" value="TreeGrafter"/>
</dbReference>
<dbReference type="GO" id="GO:0031045">
    <property type="term" value="C:dense core granule"/>
    <property type="evidence" value="ECO:0007669"/>
    <property type="project" value="TreeGrafter"/>
</dbReference>
<dbReference type="GO" id="GO:0005886">
    <property type="term" value="C:plasma membrane"/>
    <property type="evidence" value="ECO:0007669"/>
    <property type="project" value="TreeGrafter"/>
</dbReference>
<dbReference type="GO" id="GO:0030672">
    <property type="term" value="C:synaptic vesicle membrane"/>
    <property type="evidence" value="ECO:0007669"/>
    <property type="project" value="UniProtKB-SubCell"/>
</dbReference>
<dbReference type="GO" id="GO:0005509">
    <property type="term" value="F:calcium ion binding"/>
    <property type="evidence" value="ECO:0007669"/>
    <property type="project" value="TreeGrafter"/>
</dbReference>
<dbReference type="GO" id="GO:0005544">
    <property type="term" value="F:calcium-dependent phospholipid binding"/>
    <property type="evidence" value="ECO:0007669"/>
    <property type="project" value="TreeGrafter"/>
</dbReference>
<dbReference type="GO" id="GO:0030276">
    <property type="term" value="F:clathrin binding"/>
    <property type="evidence" value="ECO:0007669"/>
    <property type="project" value="TreeGrafter"/>
</dbReference>
<dbReference type="GO" id="GO:0001786">
    <property type="term" value="F:phosphatidylserine binding"/>
    <property type="evidence" value="ECO:0007669"/>
    <property type="project" value="TreeGrafter"/>
</dbReference>
<dbReference type="GO" id="GO:0000149">
    <property type="term" value="F:SNARE binding"/>
    <property type="evidence" value="ECO:0007669"/>
    <property type="project" value="TreeGrafter"/>
</dbReference>
<dbReference type="GO" id="GO:0048791">
    <property type="term" value="P:calcium ion-regulated exocytosis of neurotransmitter"/>
    <property type="evidence" value="ECO:0007669"/>
    <property type="project" value="TreeGrafter"/>
</dbReference>
<dbReference type="GO" id="GO:0048488">
    <property type="term" value="P:synaptic vesicle endocytosis"/>
    <property type="evidence" value="ECO:0007669"/>
    <property type="project" value="TreeGrafter"/>
</dbReference>
<dbReference type="CDD" id="cd08385">
    <property type="entry name" value="C2A_Synaptotagmin-1-5-6-9-10"/>
    <property type="match status" value="1"/>
</dbReference>
<dbReference type="CDD" id="cd08402">
    <property type="entry name" value="C2B_Synaptotagmin-1"/>
    <property type="match status" value="1"/>
</dbReference>
<dbReference type="FunFam" id="2.60.40.150:FF:000007">
    <property type="entry name" value="Synaptotagmin 1"/>
    <property type="match status" value="1"/>
</dbReference>
<dbReference type="FunFam" id="2.60.40.150:FF:000016">
    <property type="entry name" value="Synaptotagmin 1"/>
    <property type="match status" value="1"/>
</dbReference>
<dbReference type="Gene3D" id="2.60.40.150">
    <property type="entry name" value="C2 domain"/>
    <property type="match status" value="2"/>
</dbReference>
<dbReference type="InterPro" id="IPR000008">
    <property type="entry name" value="C2_dom"/>
</dbReference>
<dbReference type="InterPro" id="IPR035892">
    <property type="entry name" value="C2_domain_sf"/>
</dbReference>
<dbReference type="InterPro" id="IPR001565">
    <property type="entry name" value="Synaptotagmin"/>
</dbReference>
<dbReference type="PANTHER" id="PTHR10024">
    <property type="entry name" value="SYNAPTOTAGMIN"/>
    <property type="match status" value="1"/>
</dbReference>
<dbReference type="PANTHER" id="PTHR10024:SF239">
    <property type="entry name" value="SYNAPTOTAGMIN-1"/>
    <property type="match status" value="1"/>
</dbReference>
<dbReference type="Pfam" id="PF00168">
    <property type="entry name" value="C2"/>
    <property type="match status" value="2"/>
</dbReference>
<dbReference type="PRINTS" id="PR00360">
    <property type="entry name" value="C2DOMAIN"/>
</dbReference>
<dbReference type="PRINTS" id="PR00399">
    <property type="entry name" value="SYNAPTOTAGMN"/>
</dbReference>
<dbReference type="SMART" id="SM00239">
    <property type="entry name" value="C2"/>
    <property type="match status" value="2"/>
</dbReference>
<dbReference type="SUPFAM" id="SSF49562">
    <property type="entry name" value="C2 domain (Calcium/lipid-binding domain, CaLB)"/>
    <property type="match status" value="2"/>
</dbReference>
<dbReference type="PROSITE" id="PS50004">
    <property type="entry name" value="C2"/>
    <property type="match status" value="2"/>
</dbReference>
<proteinExistence type="evidence at transcript level"/>
<feature type="chain" id="PRO_0000183983" description="Synaptotagmin-A">
    <location>
        <begin position="1"/>
        <end position="427"/>
    </location>
</feature>
<feature type="topological domain" description="Vesicular" evidence="2">
    <location>
        <begin position="1"/>
        <end position="57"/>
    </location>
</feature>
<feature type="transmembrane region" description="Helical" evidence="2">
    <location>
        <begin position="58"/>
        <end position="84"/>
    </location>
</feature>
<feature type="topological domain" description="Cytoplasmic" evidence="2">
    <location>
        <begin position="85"/>
        <end position="427"/>
    </location>
</feature>
<feature type="domain" description="C2 1" evidence="3">
    <location>
        <begin position="147"/>
        <end position="266"/>
    </location>
</feature>
<feature type="domain" description="C2 2" evidence="3">
    <location>
        <begin position="278"/>
        <end position="411"/>
    </location>
</feature>
<feature type="region of interest" description="Disordered" evidence="4">
    <location>
        <begin position="96"/>
        <end position="145"/>
    </location>
</feature>
<feature type="region of interest" description="Phospholipid binding" evidence="5">
    <location>
        <begin position="141"/>
        <end position="387"/>
    </location>
</feature>
<feature type="compositionally biased region" description="Basic and acidic residues" evidence="4">
    <location>
        <begin position="109"/>
        <end position="124"/>
    </location>
</feature>
<feature type="binding site" evidence="3">
    <location>
        <position position="177"/>
    </location>
    <ligand>
        <name>Ca(2+)</name>
        <dbReference type="ChEBI" id="CHEBI:29108"/>
        <label>2</label>
    </ligand>
</feature>
<feature type="binding site" evidence="3">
    <location>
        <position position="178"/>
    </location>
    <ligand>
        <name>Ca(2+)</name>
        <dbReference type="ChEBI" id="CHEBI:29108"/>
        <label>1</label>
    </ligand>
</feature>
<feature type="binding site" evidence="3">
    <location>
        <position position="178"/>
    </location>
    <ligand>
        <name>Ca(2+)</name>
        <dbReference type="ChEBI" id="CHEBI:29108"/>
        <label>2</label>
    </ligand>
</feature>
<feature type="binding site" evidence="3">
    <location>
        <position position="184"/>
    </location>
    <ligand>
        <name>Ca(2+)</name>
        <dbReference type="ChEBI" id="CHEBI:29108"/>
        <label>1</label>
    </ligand>
</feature>
<feature type="binding site" evidence="3">
    <location>
        <position position="236"/>
    </location>
    <ligand>
        <name>Ca(2+)</name>
        <dbReference type="ChEBI" id="CHEBI:29108"/>
        <label>1</label>
    </ligand>
</feature>
<feature type="binding site" evidence="3">
    <location>
        <position position="236"/>
    </location>
    <ligand>
        <name>Ca(2+)</name>
        <dbReference type="ChEBI" id="CHEBI:29108"/>
        <label>2</label>
    </ligand>
</feature>
<feature type="binding site" evidence="3">
    <location>
        <position position="237"/>
    </location>
    <ligand>
        <name>Ca(2+)</name>
        <dbReference type="ChEBI" id="CHEBI:29108"/>
        <label>1</label>
    </ligand>
</feature>
<feature type="binding site" evidence="3">
    <location>
        <position position="238"/>
    </location>
    <ligand>
        <name>Ca(2+)</name>
        <dbReference type="ChEBI" id="CHEBI:29108"/>
        <label>1</label>
    </ligand>
</feature>
<feature type="binding site" evidence="3">
    <location>
        <position position="238"/>
    </location>
    <ligand>
        <name>Ca(2+)</name>
        <dbReference type="ChEBI" id="CHEBI:29108"/>
        <label>2</label>
    </ligand>
</feature>
<feature type="binding site" evidence="3">
    <location>
        <position position="238"/>
    </location>
    <ligand>
        <name>Ca(2+)</name>
        <dbReference type="ChEBI" id="CHEBI:29108"/>
        <label>3</label>
    </ligand>
</feature>
<feature type="binding site" evidence="3">
    <location>
        <position position="241"/>
    </location>
    <ligand>
        <name>Ca(2+)</name>
        <dbReference type="ChEBI" id="CHEBI:29108"/>
        <label>3</label>
    </ligand>
</feature>
<feature type="binding site" evidence="3">
    <location>
        <position position="242"/>
    </location>
    <ligand>
        <name>Ca(2+)</name>
        <dbReference type="ChEBI" id="CHEBI:29108"/>
        <label>3</label>
    </ligand>
</feature>
<feature type="binding site" evidence="3">
    <location>
        <position position="244"/>
    </location>
    <ligand>
        <name>Ca(2+)</name>
        <dbReference type="ChEBI" id="CHEBI:29108"/>
        <label>2</label>
    </ligand>
</feature>
<feature type="binding site" evidence="3">
    <location>
        <position position="244"/>
    </location>
    <ligand>
        <name>Ca(2+)</name>
        <dbReference type="ChEBI" id="CHEBI:29108"/>
        <label>3</label>
    </ligand>
</feature>
<feature type="binding site" evidence="3">
    <location>
        <position position="309"/>
    </location>
    <ligand>
        <name>Ca(2+)</name>
        <dbReference type="ChEBI" id="CHEBI:29108"/>
        <label>4</label>
    </ligand>
</feature>
<feature type="binding site" evidence="3">
    <location>
        <position position="309"/>
    </location>
    <ligand>
        <name>Ca(2+)</name>
        <dbReference type="ChEBI" id="CHEBI:29108"/>
        <label>5</label>
    </ligand>
</feature>
<feature type="binding site" evidence="3">
    <location>
        <position position="315"/>
    </location>
    <ligand>
        <name>Ca(2+)</name>
        <dbReference type="ChEBI" id="CHEBI:29108"/>
        <label>4</label>
    </ligand>
</feature>
<feature type="binding site" evidence="3">
    <location>
        <position position="369"/>
    </location>
    <ligand>
        <name>Ca(2+)</name>
        <dbReference type="ChEBI" id="CHEBI:29108"/>
        <label>4</label>
    </ligand>
</feature>
<feature type="binding site" evidence="3">
    <location>
        <position position="369"/>
    </location>
    <ligand>
        <name>Ca(2+)</name>
        <dbReference type="ChEBI" id="CHEBI:29108"/>
        <label>5</label>
    </ligand>
</feature>
<feature type="binding site" evidence="3">
    <location>
        <position position="371"/>
    </location>
    <ligand>
        <name>Ca(2+)</name>
        <dbReference type="ChEBI" id="CHEBI:29108"/>
        <label>4</label>
    </ligand>
</feature>
<feature type="binding site" evidence="3">
    <location>
        <position position="371"/>
    </location>
    <ligand>
        <name>Ca(2+)</name>
        <dbReference type="ChEBI" id="CHEBI:29108"/>
        <label>5</label>
    </ligand>
</feature>
<feature type="binding site" evidence="3">
    <location>
        <position position="377"/>
    </location>
    <ligand>
        <name>Ca(2+)</name>
        <dbReference type="ChEBI" id="CHEBI:29108"/>
        <label>5</label>
    </ligand>
</feature>
<feature type="glycosylation site" description="N-linked (GlcNAc...) asparagine" evidence="2">
    <location>
        <position position="26"/>
    </location>
</feature>
<organism>
    <name type="scientific">Diplobatis ommata</name>
    <name type="common">Ocellated electric ray</name>
    <name type="synonym">Discopyge ommata</name>
    <dbReference type="NCBI Taxonomy" id="1870830"/>
    <lineage>
        <taxon>Eukaryota</taxon>
        <taxon>Metazoa</taxon>
        <taxon>Chordata</taxon>
        <taxon>Craniata</taxon>
        <taxon>Vertebrata</taxon>
        <taxon>Chondrichthyes</taxon>
        <taxon>Elasmobranchii</taxon>
        <taxon>Batoidea</taxon>
        <taxon>Torpediniformes</taxon>
        <taxon>Narcinidae</taxon>
        <taxon>Diplobatis</taxon>
    </lineage>
</organism>
<evidence type="ECO:0000250" key="1"/>
<evidence type="ECO:0000255" key="2"/>
<evidence type="ECO:0000255" key="3">
    <source>
        <dbReference type="PROSITE-ProRule" id="PRU00041"/>
    </source>
</evidence>
<evidence type="ECO:0000256" key="4">
    <source>
        <dbReference type="SAM" id="MobiDB-lite"/>
    </source>
</evidence>
<evidence type="ECO:0000305" key="5"/>
<reference key="1">
    <citation type="journal article" date="1991" name="Neuron">
        <title>Differential expression of the p65 gene family.</title>
        <authorList>
            <person name="Wendland B."/>
            <person name="Miller K.G."/>
            <person name="Schilling J."/>
            <person name="Scheller R.H."/>
        </authorList>
    </citation>
    <scope>NUCLEOTIDE SEQUENCE [MRNA]</scope>
</reference>
<gene>
    <name type="primary">P65-A</name>
</gene>
<name>SY61_DIPOM</name>
<comment type="function">
    <text>May have a regulatory role in the membrane interactions during trafficking of synaptic vesicles at the active zone of the synapse. It binds acidic phospholipids with a specificity that requires the presence of both an acidic head group and a diacyl backbone.</text>
</comment>
<comment type="cofactor">
    <cofactor evidence="3">
        <name>Ca(2+)</name>
        <dbReference type="ChEBI" id="CHEBI:29108"/>
    </cofactor>
    <text evidence="1">Binds 3 Ca(2+) ions per subunit. The ions are bound to the C2 domains.</text>
</comment>
<comment type="subunit">
    <text>Homodimer or homotrimer (possible).</text>
</comment>
<comment type="subcellular location">
    <subcellularLocation>
        <location>Cytoplasmic vesicle</location>
        <location>Secretory vesicle</location>
        <location>Synaptic vesicle membrane</location>
        <topology>Single-pass membrane protein</topology>
    </subcellularLocation>
    <subcellularLocation>
        <location>Synapse</location>
    </subcellularLocation>
    <text>Synaptic vesicles in neurons.</text>
</comment>
<comment type="tissue specificity">
    <text>Forebrain, cerebellum and neuroendocrine cells.</text>
</comment>
<comment type="similarity">
    <text evidence="5">Belongs to the synaptotagmin family.</text>
</comment>
<protein>
    <recommendedName>
        <fullName>Synaptotagmin-A</fullName>
    </recommendedName>
    <alternativeName>
        <fullName>Synaptic vesicle protein O-p65-A</fullName>
    </alternativeName>
</protein>
<sequence length="427" mass="47768">MKLTEAYHDALAALPATPPLPTAVANATEAAAGSEEGKQDGFSKVKVKEKFMNELNKIPLPPWALVAIAIVAIILGLTCCFCICKKCLLKKKNKKKGKEKGGKNAMTMKDVKEMGKSGKEQALKDEDEDAETGLTTDGKEEEKEDEKLGKLQFSLDYDFQNNQLIVGIIQAAELPALDVGGTSDPYVKVFVLPDKKKKYETKVHRKTLNPVFNESFIFKIPYSELGGKTLVMAVYDFDRFSKHDVIGEAKVPMNTVDFGHVTEEWRDLQGAEKEEQEKLGDICFSLRYVPTAGKLTVVILEAKNLKKMDVGGLSDPYVKIHLMQNGKRLKKKKTTIKKNTLNPYYNESFSFEVPFEQIQKVQVVVTVLDYDKIGKNDAIGKVFVGYNSTAAELRHWSDMLANPRRPIAQWHTLQPEEEVDATLGMKK</sequence>
<accession>P24505</accession>